<proteinExistence type="predicted"/>
<accession>Q54P08</accession>
<organism>
    <name type="scientific">Dictyostelium discoideum</name>
    <name type="common">Social amoeba</name>
    <dbReference type="NCBI Taxonomy" id="44689"/>
    <lineage>
        <taxon>Eukaryota</taxon>
        <taxon>Amoebozoa</taxon>
        <taxon>Evosea</taxon>
        <taxon>Eumycetozoa</taxon>
        <taxon>Dictyostelia</taxon>
        <taxon>Dictyosteliales</taxon>
        <taxon>Dictyosteliaceae</taxon>
        <taxon>Dictyostelium</taxon>
    </lineage>
</organism>
<reference key="1">
    <citation type="journal article" date="2005" name="Nature">
        <title>The genome of the social amoeba Dictyostelium discoideum.</title>
        <authorList>
            <person name="Eichinger L."/>
            <person name="Pachebat J.A."/>
            <person name="Gloeckner G."/>
            <person name="Rajandream M.A."/>
            <person name="Sucgang R."/>
            <person name="Berriman M."/>
            <person name="Song J."/>
            <person name="Olsen R."/>
            <person name="Szafranski K."/>
            <person name="Xu Q."/>
            <person name="Tunggal B."/>
            <person name="Kummerfeld S."/>
            <person name="Madera M."/>
            <person name="Konfortov B.A."/>
            <person name="Rivero F."/>
            <person name="Bankier A.T."/>
            <person name="Lehmann R."/>
            <person name="Hamlin N."/>
            <person name="Davies R."/>
            <person name="Gaudet P."/>
            <person name="Fey P."/>
            <person name="Pilcher K."/>
            <person name="Chen G."/>
            <person name="Saunders D."/>
            <person name="Sodergren E.J."/>
            <person name="Davis P."/>
            <person name="Kerhornou A."/>
            <person name="Nie X."/>
            <person name="Hall N."/>
            <person name="Anjard C."/>
            <person name="Hemphill L."/>
            <person name="Bason N."/>
            <person name="Farbrother P."/>
            <person name="Desany B."/>
            <person name="Just E."/>
            <person name="Morio T."/>
            <person name="Rost R."/>
            <person name="Churcher C.M."/>
            <person name="Cooper J."/>
            <person name="Haydock S."/>
            <person name="van Driessche N."/>
            <person name="Cronin A."/>
            <person name="Goodhead I."/>
            <person name="Muzny D.M."/>
            <person name="Mourier T."/>
            <person name="Pain A."/>
            <person name="Lu M."/>
            <person name="Harper D."/>
            <person name="Lindsay R."/>
            <person name="Hauser H."/>
            <person name="James K.D."/>
            <person name="Quiles M."/>
            <person name="Madan Babu M."/>
            <person name="Saito T."/>
            <person name="Buchrieser C."/>
            <person name="Wardroper A."/>
            <person name="Felder M."/>
            <person name="Thangavelu M."/>
            <person name="Johnson D."/>
            <person name="Knights A."/>
            <person name="Loulseged H."/>
            <person name="Mungall K.L."/>
            <person name="Oliver K."/>
            <person name="Price C."/>
            <person name="Quail M.A."/>
            <person name="Urushihara H."/>
            <person name="Hernandez J."/>
            <person name="Rabbinowitsch E."/>
            <person name="Steffen D."/>
            <person name="Sanders M."/>
            <person name="Ma J."/>
            <person name="Kohara Y."/>
            <person name="Sharp S."/>
            <person name="Simmonds M.N."/>
            <person name="Spiegler S."/>
            <person name="Tivey A."/>
            <person name="Sugano S."/>
            <person name="White B."/>
            <person name="Walker D."/>
            <person name="Woodward J.R."/>
            <person name="Winckler T."/>
            <person name="Tanaka Y."/>
            <person name="Shaulsky G."/>
            <person name="Schleicher M."/>
            <person name="Weinstock G.M."/>
            <person name="Rosenthal A."/>
            <person name="Cox E.C."/>
            <person name="Chisholm R.L."/>
            <person name="Gibbs R.A."/>
            <person name="Loomis W.F."/>
            <person name="Platzer M."/>
            <person name="Kay R.R."/>
            <person name="Williams J.G."/>
            <person name="Dear P.H."/>
            <person name="Noegel A.A."/>
            <person name="Barrell B.G."/>
            <person name="Kuspa A."/>
        </authorList>
    </citation>
    <scope>NUCLEOTIDE SEQUENCE [LARGE SCALE GENOMIC DNA]</scope>
    <source>
        <strain>AX4</strain>
    </source>
</reference>
<comment type="subcellular location">
    <subcellularLocation>
        <location evidence="3">Membrane</location>
        <topology evidence="3">Multi-pass membrane protein</topology>
    </subcellularLocation>
</comment>
<keyword id="KW-0472">Membrane</keyword>
<keyword id="KW-1185">Reference proteome</keyword>
<keyword id="KW-0812">Transmembrane</keyword>
<keyword id="KW-1133">Transmembrane helix</keyword>
<gene>
    <name type="ORF">DDB_G0285049</name>
</gene>
<dbReference type="EMBL" id="AAFI02000073">
    <property type="protein sequence ID" value="EAL64988.1"/>
    <property type="molecule type" value="Genomic_DNA"/>
</dbReference>
<dbReference type="RefSeq" id="XP_639909.1">
    <property type="nucleotide sequence ID" value="XM_634817.1"/>
</dbReference>
<dbReference type="FunCoup" id="Q54P08">
    <property type="interactions" value="877"/>
</dbReference>
<dbReference type="STRING" id="44689.Q54P08"/>
<dbReference type="PaxDb" id="44689-DDB0218649"/>
<dbReference type="EnsemblProtists" id="EAL64988">
    <property type="protein sequence ID" value="EAL64988"/>
    <property type="gene ID" value="DDB_G0285049"/>
</dbReference>
<dbReference type="GeneID" id="8624821"/>
<dbReference type="KEGG" id="ddi:DDB_G0285049"/>
<dbReference type="dictyBase" id="DDB_G0285049"/>
<dbReference type="VEuPathDB" id="AmoebaDB:DDB_G0285049"/>
<dbReference type="eggNOG" id="ENOG502RI4B">
    <property type="taxonomic scope" value="Eukaryota"/>
</dbReference>
<dbReference type="HOGENOM" id="CLU_748918_0_0_1"/>
<dbReference type="InParanoid" id="Q54P08"/>
<dbReference type="OMA" id="CIMSITI"/>
<dbReference type="PRO" id="PR:Q54P08"/>
<dbReference type="Proteomes" id="UP000002195">
    <property type="component" value="Chromosome 4"/>
</dbReference>
<dbReference type="GO" id="GO:0016020">
    <property type="term" value="C:membrane"/>
    <property type="evidence" value="ECO:0007669"/>
    <property type="project" value="UniProtKB-SubCell"/>
</dbReference>
<dbReference type="InterPro" id="IPR053129">
    <property type="entry name" value="Integrator_complex_assoc"/>
</dbReference>
<dbReference type="PANTHER" id="PTHR48194">
    <property type="entry name" value="FINGER PROTEIN, PUTATIVE-RELATED"/>
    <property type="match status" value="1"/>
</dbReference>
<dbReference type="PANTHER" id="PTHR48194:SF1">
    <property type="entry name" value="INTEGRATOR COMPLEX SUBUNIT 10-LIKE PROTEIN"/>
    <property type="match status" value="1"/>
</dbReference>
<protein>
    <recommendedName>
        <fullName>Putative uncharacterized transmembrane protein DDB_G0285049</fullName>
    </recommendedName>
</protein>
<sequence length="370" mass="42991">MVFLKVDCSKLFIFLCCIMSITILSFSLVFPYYESDFIIVNHTDIRNNTIVINKEFHQFQFFGTYFYDINRFEMKTSFNQAYLITKRVSYDSYDSSTKNSVFQIITSMTLTSLIAKVFPIPILIVNMYINLQKPKRRYLNQIQQHHNNNNNNNNNNNNNNNNNNNNNNNNNNNNNNNNNNNNQNNNNNDNNDNNDVLDGANEVVINTMPTYEVLMERYQSSASYYLITQLVVNGVSFMITLFSTFVVTHRISITMKLLTSIDEQIFNKPLCYTKNLDPFGYCNSFIGFSSTTSDENFMDFSWGPSFGWYLSLCSLCLDSFSIIVIIFLIITEGKLKKPKQPHKFTNILNLSDMDLINYRLLTLNQRIGTD</sequence>
<name>Y8649_DICDI</name>
<feature type="chain" id="PRO_0000350811" description="Putative uncharacterized transmembrane protein DDB_G0285049">
    <location>
        <begin position="1"/>
        <end position="370"/>
    </location>
</feature>
<feature type="transmembrane region" description="Helical" evidence="1">
    <location>
        <begin position="11"/>
        <end position="31"/>
    </location>
</feature>
<feature type="transmembrane region" description="Helical" evidence="1">
    <location>
        <begin position="104"/>
        <end position="124"/>
    </location>
</feature>
<feature type="transmembrane region" description="Helical" evidence="1">
    <location>
        <begin position="227"/>
        <end position="247"/>
    </location>
</feature>
<feature type="transmembrane region" description="Helical" evidence="1">
    <location>
        <begin position="310"/>
        <end position="330"/>
    </location>
</feature>
<feature type="region of interest" description="Disordered" evidence="2">
    <location>
        <begin position="145"/>
        <end position="197"/>
    </location>
</feature>
<feature type="compositionally biased region" description="Low complexity" evidence="2">
    <location>
        <begin position="147"/>
        <end position="194"/>
    </location>
</feature>
<evidence type="ECO:0000255" key="1"/>
<evidence type="ECO:0000256" key="2">
    <source>
        <dbReference type="SAM" id="MobiDB-lite"/>
    </source>
</evidence>
<evidence type="ECO:0000305" key="3"/>